<reference key="1">
    <citation type="journal article" date="1996" name="DNA Res.">
        <title>Prediction of the coding sequences of unidentified human genes. V. The coding sequences of 40 new genes (KIAA0161-KIAA0200) deduced by analysis of cDNA clones from human cell line KG-1.</title>
        <authorList>
            <person name="Nagase T."/>
            <person name="Seki N."/>
            <person name="Ishikawa K."/>
            <person name="Tanaka A."/>
            <person name="Nomura N."/>
        </authorList>
    </citation>
    <scope>NUCLEOTIDE SEQUENCE [LARGE SCALE MRNA] (ISOFORM 1)</scope>
    <source>
        <tissue>Bone marrow</tissue>
    </source>
</reference>
<reference key="2">
    <citation type="journal article" date="2004" name="Nat. Genet.">
        <title>Complete sequencing and characterization of 21,243 full-length human cDNAs.</title>
        <authorList>
            <person name="Ota T."/>
            <person name="Suzuki Y."/>
            <person name="Nishikawa T."/>
            <person name="Otsuki T."/>
            <person name="Sugiyama T."/>
            <person name="Irie R."/>
            <person name="Wakamatsu A."/>
            <person name="Hayashi K."/>
            <person name="Sato H."/>
            <person name="Nagai K."/>
            <person name="Kimura K."/>
            <person name="Makita H."/>
            <person name="Sekine M."/>
            <person name="Obayashi M."/>
            <person name="Nishi T."/>
            <person name="Shibahara T."/>
            <person name="Tanaka T."/>
            <person name="Ishii S."/>
            <person name="Yamamoto J."/>
            <person name="Saito K."/>
            <person name="Kawai Y."/>
            <person name="Isono Y."/>
            <person name="Nakamura Y."/>
            <person name="Nagahari K."/>
            <person name="Murakami K."/>
            <person name="Yasuda T."/>
            <person name="Iwayanagi T."/>
            <person name="Wagatsuma M."/>
            <person name="Shiratori A."/>
            <person name="Sudo H."/>
            <person name="Hosoiri T."/>
            <person name="Kaku Y."/>
            <person name="Kodaira H."/>
            <person name="Kondo H."/>
            <person name="Sugawara M."/>
            <person name="Takahashi M."/>
            <person name="Kanda K."/>
            <person name="Yokoi T."/>
            <person name="Furuya T."/>
            <person name="Kikkawa E."/>
            <person name="Omura Y."/>
            <person name="Abe K."/>
            <person name="Kamihara K."/>
            <person name="Katsuta N."/>
            <person name="Sato K."/>
            <person name="Tanikawa M."/>
            <person name="Yamazaki M."/>
            <person name="Ninomiya K."/>
            <person name="Ishibashi T."/>
            <person name="Yamashita H."/>
            <person name="Murakawa K."/>
            <person name="Fujimori K."/>
            <person name="Tanai H."/>
            <person name="Kimata M."/>
            <person name="Watanabe M."/>
            <person name="Hiraoka S."/>
            <person name="Chiba Y."/>
            <person name="Ishida S."/>
            <person name="Ono Y."/>
            <person name="Takiguchi S."/>
            <person name="Watanabe S."/>
            <person name="Yosida M."/>
            <person name="Hotuta T."/>
            <person name="Kusano J."/>
            <person name="Kanehori K."/>
            <person name="Takahashi-Fujii A."/>
            <person name="Hara H."/>
            <person name="Tanase T.-O."/>
            <person name="Nomura Y."/>
            <person name="Togiya S."/>
            <person name="Komai F."/>
            <person name="Hara R."/>
            <person name="Takeuchi K."/>
            <person name="Arita M."/>
            <person name="Imose N."/>
            <person name="Musashino K."/>
            <person name="Yuuki H."/>
            <person name="Oshima A."/>
            <person name="Sasaki N."/>
            <person name="Aotsuka S."/>
            <person name="Yoshikawa Y."/>
            <person name="Matsunawa H."/>
            <person name="Ichihara T."/>
            <person name="Shiohata N."/>
            <person name="Sano S."/>
            <person name="Moriya S."/>
            <person name="Momiyama H."/>
            <person name="Satoh N."/>
            <person name="Takami S."/>
            <person name="Terashima Y."/>
            <person name="Suzuki O."/>
            <person name="Nakagawa S."/>
            <person name="Senoh A."/>
            <person name="Mizoguchi H."/>
            <person name="Goto Y."/>
            <person name="Shimizu F."/>
            <person name="Wakebe H."/>
            <person name="Hishigaki H."/>
            <person name="Watanabe T."/>
            <person name="Sugiyama A."/>
            <person name="Takemoto M."/>
            <person name="Kawakami B."/>
            <person name="Yamazaki M."/>
            <person name="Watanabe K."/>
            <person name="Kumagai A."/>
            <person name="Itakura S."/>
            <person name="Fukuzumi Y."/>
            <person name="Fujimori Y."/>
            <person name="Komiyama M."/>
            <person name="Tashiro H."/>
            <person name="Tanigami A."/>
            <person name="Fujiwara T."/>
            <person name="Ono T."/>
            <person name="Yamada K."/>
            <person name="Fujii Y."/>
            <person name="Ozaki K."/>
            <person name="Hirao M."/>
            <person name="Ohmori Y."/>
            <person name="Kawabata A."/>
            <person name="Hikiji T."/>
            <person name="Kobatake N."/>
            <person name="Inagaki H."/>
            <person name="Ikema Y."/>
            <person name="Okamoto S."/>
            <person name="Okitani R."/>
            <person name="Kawakami T."/>
            <person name="Noguchi S."/>
            <person name="Itoh T."/>
            <person name="Shigeta K."/>
            <person name="Senba T."/>
            <person name="Matsumura K."/>
            <person name="Nakajima Y."/>
            <person name="Mizuno T."/>
            <person name="Morinaga M."/>
            <person name="Sasaki M."/>
            <person name="Togashi T."/>
            <person name="Oyama M."/>
            <person name="Hata H."/>
            <person name="Watanabe M."/>
            <person name="Komatsu T."/>
            <person name="Mizushima-Sugano J."/>
            <person name="Satoh T."/>
            <person name="Shirai Y."/>
            <person name="Takahashi Y."/>
            <person name="Nakagawa K."/>
            <person name="Okumura K."/>
            <person name="Nagase T."/>
            <person name="Nomura N."/>
            <person name="Kikuchi H."/>
            <person name="Masuho Y."/>
            <person name="Yamashita R."/>
            <person name="Nakai K."/>
            <person name="Yada T."/>
            <person name="Nakamura Y."/>
            <person name="Ohara O."/>
            <person name="Isogai T."/>
            <person name="Sugano S."/>
        </authorList>
    </citation>
    <scope>NUCLEOTIDE SEQUENCE [LARGE SCALE MRNA] (ISOFORM 2)</scope>
    <source>
        <tissue>Testis</tissue>
    </source>
</reference>
<reference key="3">
    <citation type="journal article" date="2006" name="Nature">
        <title>The finished DNA sequence of human chromosome 12.</title>
        <authorList>
            <person name="Scherer S.E."/>
            <person name="Muzny D.M."/>
            <person name="Buhay C.J."/>
            <person name="Chen R."/>
            <person name="Cree A."/>
            <person name="Ding Y."/>
            <person name="Dugan-Rocha S."/>
            <person name="Gill R."/>
            <person name="Gunaratne P."/>
            <person name="Harris R.A."/>
            <person name="Hawes A.C."/>
            <person name="Hernandez J."/>
            <person name="Hodgson A.V."/>
            <person name="Hume J."/>
            <person name="Jackson A."/>
            <person name="Khan Z.M."/>
            <person name="Kovar-Smith C."/>
            <person name="Lewis L.R."/>
            <person name="Lozado R.J."/>
            <person name="Metzker M.L."/>
            <person name="Milosavljevic A."/>
            <person name="Miner G.R."/>
            <person name="Montgomery K.T."/>
            <person name="Morgan M.B."/>
            <person name="Nazareth L.V."/>
            <person name="Scott G."/>
            <person name="Sodergren E."/>
            <person name="Song X.-Z."/>
            <person name="Steffen D."/>
            <person name="Lovering R.C."/>
            <person name="Wheeler D.A."/>
            <person name="Worley K.C."/>
            <person name="Yuan Y."/>
            <person name="Zhang Z."/>
            <person name="Adams C.Q."/>
            <person name="Ansari-Lari M.A."/>
            <person name="Ayele M."/>
            <person name="Brown M.J."/>
            <person name="Chen G."/>
            <person name="Chen Z."/>
            <person name="Clerc-Blankenburg K.P."/>
            <person name="Davis C."/>
            <person name="Delgado O."/>
            <person name="Dinh H.H."/>
            <person name="Draper H."/>
            <person name="Gonzalez-Garay M.L."/>
            <person name="Havlak P."/>
            <person name="Jackson L.R."/>
            <person name="Jacob L.S."/>
            <person name="Kelly S.H."/>
            <person name="Li L."/>
            <person name="Li Z."/>
            <person name="Liu J."/>
            <person name="Liu W."/>
            <person name="Lu J."/>
            <person name="Maheshwari M."/>
            <person name="Nguyen B.-V."/>
            <person name="Okwuonu G.O."/>
            <person name="Pasternak S."/>
            <person name="Perez L.M."/>
            <person name="Plopper F.J.H."/>
            <person name="Santibanez J."/>
            <person name="Shen H."/>
            <person name="Tabor P.E."/>
            <person name="Verduzco D."/>
            <person name="Waldron L."/>
            <person name="Wang Q."/>
            <person name="Williams G.A."/>
            <person name="Zhang J."/>
            <person name="Zhou J."/>
            <person name="Allen C.C."/>
            <person name="Amin A.G."/>
            <person name="Anyalebechi V."/>
            <person name="Bailey M."/>
            <person name="Barbaria J.A."/>
            <person name="Bimage K.E."/>
            <person name="Bryant N.P."/>
            <person name="Burch P.E."/>
            <person name="Burkett C.E."/>
            <person name="Burrell K.L."/>
            <person name="Calderon E."/>
            <person name="Cardenas V."/>
            <person name="Carter K."/>
            <person name="Casias K."/>
            <person name="Cavazos I."/>
            <person name="Cavazos S.R."/>
            <person name="Ceasar H."/>
            <person name="Chacko J."/>
            <person name="Chan S.N."/>
            <person name="Chavez D."/>
            <person name="Christopoulos C."/>
            <person name="Chu J."/>
            <person name="Cockrell R."/>
            <person name="Cox C.D."/>
            <person name="Dang M."/>
            <person name="Dathorne S.R."/>
            <person name="David R."/>
            <person name="Davis C.M."/>
            <person name="Davy-Carroll L."/>
            <person name="Deshazo D.R."/>
            <person name="Donlin J.E."/>
            <person name="D'Souza L."/>
            <person name="Eaves K.A."/>
            <person name="Egan A."/>
            <person name="Emery-Cohen A.J."/>
            <person name="Escotto M."/>
            <person name="Flagg N."/>
            <person name="Forbes L.D."/>
            <person name="Gabisi A.M."/>
            <person name="Garza M."/>
            <person name="Hamilton C."/>
            <person name="Henderson N."/>
            <person name="Hernandez O."/>
            <person name="Hines S."/>
            <person name="Hogues M.E."/>
            <person name="Huang M."/>
            <person name="Idlebird D.G."/>
            <person name="Johnson R."/>
            <person name="Jolivet A."/>
            <person name="Jones S."/>
            <person name="Kagan R."/>
            <person name="King L.M."/>
            <person name="Leal B."/>
            <person name="Lebow H."/>
            <person name="Lee S."/>
            <person name="LeVan J.M."/>
            <person name="Lewis L.C."/>
            <person name="London P."/>
            <person name="Lorensuhewa L.M."/>
            <person name="Loulseged H."/>
            <person name="Lovett D.A."/>
            <person name="Lucier A."/>
            <person name="Lucier R.L."/>
            <person name="Ma J."/>
            <person name="Madu R.C."/>
            <person name="Mapua P."/>
            <person name="Martindale A.D."/>
            <person name="Martinez E."/>
            <person name="Massey E."/>
            <person name="Mawhiney S."/>
            <person name="Meador M.G."/>
            <person name="Mendez S."/>
            <person name="Mercado C."/>
            <person name="Mercado I.C."/>
            <person name="Merritt C.E."/>
            <person name="Miner Z.L."/>
            <person name="Minja E."/>
            <person name="Mitchell T."/>
            <person name="Mohabbat F."/>
            <person name="Mohabbat K."/>
            <person name="Montgomery B."/>
            <person name="Moore N."/>
            <person name="Morris S."/>
            <person name="Munidasa M."/>
            <person name="Ngo R.N."/>
            <person name="Nguyen N.B."/>
            <person name="Nickerson E."/>
            <person name="Nwaokelemeh O.O."/>
            <person name="Nwokenkwo S."/>
            <person name="Obregon M."/>
            <person name="Oguh M."/>
            <person name="Oragunye N."/>
            <person name="Oviedo R.J."/>
            <person name="Parish B.J."/>
            <person name="Parker D.N."/>
            <person name="Parrish J."/>
            <person name="Parks K.L."/>
            <person name="Paul H.A."/>
            <person name="Payton B.A."/>
            <person name="Perez A."/>
            <person name="Perrin W."/>
            <person name="Pickens A."/>
            <person name="Primus E.L."/>
            <person name="Pu L.-L."/>
            <person name="Puazo M."/>
            <person name="Quiles M.M."/>
            <person name="Quiroz J.B."/>
            <person name="Rabata D."/>
            <person name="Reeves K."/>
            <person name="Ruiz S.J."/>
            <person name="Shao H."/>
            <person name="Sisson I."/>
            <person name="Sonaike T."/>
            <person name="Sorelle R.P."/>
            <person name="Sutton A.E."/>
            <person name="Svatek A.F."/>
            <person name="Svetz L.A."/>
            <person name="Tamerisa K.S."/>
            <person name="Taylor T.R."/>
            <person name="Teague B."/>
            <person name="Thomas N."/>
            <person name="Thorn R.D."/>
            <person name="Trejos Z.Y."/>
            <person name="Trevino B.K."/>
            <person name="Ukegbu O.N."/>
            <person name="Urban J.B."/>
            <person name="Vasquez L.I."/>
            <person name="Vera V.A."/>
            <person name="Villasana D.M."/>
            <person name="Wang L."/>
            <person name="Ward-Moore S."/>
            <person name="Warren J.T."/>
            <person name="Wei X."/>
            <person name="White F."/>
            <person name="Williamson A.L."/>
            <person name="Wleczyk R."/>
            <person name="Wooden H.S."/>
            <person name="Wooden S.H."/>
            <person name="Yen J."/>
            <person name="Yoon L."/>
            <person name="Yoon V."/>
            <person name="Zorrilla S.E."/>
            <person name="Nelson D."/>
            <person name="Kucherlapati R."/>
            <person name="Weinstock G."/>
            <person name="Gibbs R.A."/>
        </authorList>
    </citation>
    <scope>NUCLEOTIDE SEQUENCE [LARGE SCALE GENOMIC DNA]</scope>
</reference>
<reference key="4">
    <citation type="submission" date="2005-07" db="EMBL/GenBank/DDBJ databases">
        <authorList>
            <person name="Mural R.J."/>
            <person name="Istrail S."/>
            <person name="Sutton G.G."/>
            <person name="Florea L."/>
            <person name="Halpern A.L."/>
            <person name="Mobarry C.M."/>
            <person name="Lippert R."/>
            <person name="Walenz B."/>
            <person name="Shatkay H."/>
            <person name="Dew I."/>
            <person name="Miller J.R."/>
            <person name="Flanigan M.J."/>
            <person name="Edwards N.J."/>
            <person name="Bolanos R."/>
            <person name="Fasulo D."/>
            <person name="Halldorsson B.V."/>
            <person name="Hannenhalli S."/>
            <person name="Turner R."/>
            <person name="Yooseph S."/>
            <person name="Lu F."/>
            <person name="Nusskern D.R."/>
            <person name="Shue B.C."/>
            <person name="Zheng X.H."/>
            <person name="Zhong F."/>
            <person name="Delcher A.L."/>
            <person name="Huson D.H."/>
            <person name="Kravitz S.A."/>
            <person name="Mouchard L."/>
            <person name="Reinert K."/>
            <person name="Remington K.A."/>
            <person name="Clark A.G."/>
            <person name="Waterman M.S."/>
            <person name="Eichler E.E."/>
            <person name="Adams M.D."/>
            <person name="Hunkapiller M.W."/>
            <person name="Myers E.W."/>
            <person name="Venter J.C."/>
        </authorList>
    </citation>
    <scope>NUCLEOTIDE SEQUENCE [LARGE SCALE GENOMIC DNA]</scope>
</reference>
<reference key="5">
    <citation type="journal article" date="2004" name="Genome Res.">
        <title>The status, quality, and expansion of the NIH full-length cDNA project: the Mammalian Gene Collection (MGC).</title>
        <authorList>
            <consortium name="The MGC Project Team"/>
        </authorList>
    </citation>
    <scope>NUCLEOTIDE SEQUENCE [LARGE SCALE MRNA] (ISOFORM 1)</scope>
</reference>
<reference key="6">
    <citation type="journal article" date="2000" name="Nat. Cell Biol.">
        <title>Human Zw10 and ROD are mitotic checkpoint proteins that bind to kinetochores.</title>
        <authorList>
            <person name="Chan G.K.T."/>
            <person name="Jablonski S.A."/>
            <person name="Starr D.A."/>
            <person name="Goldberg M.L."/>
            <person name="Yen T.J."/>
        </authorList>
    </citation>
    <scope>FUNCTION</scope>
    <scope>SUBCELLULAR LOCATION</scope>
</reference>
<reference key="7">
    <citation type="journal article" date="2001" name="J. Cell Sci.">
        <title>The ZW10 and Rough Deal checkpoint proteins function together in a large, evolutionarily conserved complex targeted to the kinetochore.</title>
        <authorList>
            <person name="Scaeerou F."/>
            <person name="Starr D.A."/>
            <person name="Piano F."/>
            <person name="Papoulas O."/>
            <person name="Karess R.E."/>
            <person name="Goldberg M.L."/>
        </authorList>
    </citation>
    <scope>FUNCTION</scope>
    <scope>SUBCELLULAR LOCATION</scope>
</reference>
<reference key="8">
    <citation type="journal article" date="2003" name="Mol. Biol. Cell">
        <title>Zwilch, a new component of the ZW10/ROD complex required for kinetochore functions.</title>
        <authorList>
            <person name="Williams B.C."/>
            <person name="Li Z."/>
            <person name="Liu S."/>
            <person name="Williams E.V."/>
            <person name="Leung G."/>
            <person name="Yen T.J."/>
            <person name="Goldberg M.L."/>
        </authorList>
    </citation>
    <scope>INTERACTION WITH ZWILCH AND ZW10</scope>
</reference>
<reference key="9">
    <citation type="journal article" date="2005" name="J. Cell Biol.">
        <title>ZW10 links mitotic checkpoint signaling to the structural kinetochore.</title>
        <authorList>
            <person name="Kops G.J.P.L."/>
            <person name="Kim Y."/>
            <person name="Weaver B.A.A."/>
            <person name="Mao Y."/>
            <person name="McLeod I."/>
            <person name="Yates J.R. III"/>
            <person name="Tagaya M."/>
            <person name="Cleveland D.W."/>
        </authorList>
    </citation>
    <scope>FUNCTION</scope>
    <scope>IDENTIFICATION IN THE RZZ COMPLEX</scope>
</reference>
<reference key="10">
    <citation type="journal article" date="2009" name="Science">
        <title>Lysine acetylation targets protein complexes and co-regulates major cellular functions.</title>
        <authorList>
            <person name="Choudhary C."/>
            <person name="Kumar C."/>
            <person name="Gnad F."/>
            <person name="Nielsen M.L."/>
            <person name="Rehman M."/>
            <person name="Walther T.C."/>
            <person name="Olsen J.V."/>
            <person name="Mann M."/>
        </authorList>
    </citation>
    <scope>IDENTIFICATION BY MASS SPECTROMETRY [LARGE SCALE ANALYSIS]</scope>
</reference>
<reference key="11">
    <citation type="journal article" date="2010" name="Structure">
        <title>Structural analysis of the RZZ complex reveals common ancestry with multisubunit vesicle tethering machinery.</title>
        <authorList>
            <person name="Civril F."/>
            <person name="Wehenkel A."/>
            <person name="Giorgi F.M."/>
            <person name="Santaguida S."/>
            <person name="Di Fonzo A."/>
            <person name="Grigorean G."/>
            <person name="Ciccarelli F.D."/>
            <person name="Musacchio A."/>
        </authorList>
    </citation>
    <scope>INTERACTION WITH ZWILCH</scope>
    <scope>IDENTIFICATION IN THE RRZ COMPLEX</scope>
</reference>
<reference key="12">
    <citation type="journal article" date="2011" name="BMC Syst. Biol.">
        <title>Initial characterization of the human central proteome.</title>
        <authorList>
            <person name="Burkard T.R."/>
            <person name="Planyavsky M."/>
            <person name="Kaupe I."/>
            <person name="Breitwieser F.P."/>
            <person name="Buerckstuemmer T."/>
            <person name="Bennett K.L."/>
            <person name="Superti-Furga G."/>
            <person name="Colinge J."/>
        </authorList>
    </citation>
    <scope>IDENTIFICATION BY MASS SPECTROMETRY [LARGE SCALE ANALYSIS]</scope>
</reference>
<reference key="13">
    <citation type="journal article" date="2013" name="J. Proteome Res.">
        <title>Toward a comprehensive characterization of a human cancer cell phosphoproteome.</title>
        <authorList>
            <person name="Zhou H."/>
            <person name="Di Palma S."/>
            <person name="Preisinger C."/>
            <person name="Peng M."/>
            <person name="Polat A.N."/>
            <person name="Heck A.J."/>
            <person name="Mohammed S."/>
        </authorList>
    </citation>
    <scope>PHOSPHORYLATION [LARGE SCALE ANALYSIS] AT THR-1035 AND SER-1045</scope>
    <scope>IDENTIFICATION BY MASS SPECTROMETRY [LARGE SCALE ANALYSIS]</scope>
    <source>
        <tissue>Cervix carcinoma</tissue>
        <tissue>Erythroleukemia</tissue>
    </source>
</reference>
<reference key="14">
    <citation type="journal article" date="2017" name="Dev. Cell">
        <title>Mps1 Regulates Kinetochore-Microtubule Attachment Stability via the Ska Complex to Ensure Error-Free Chromosome Segregation.</title>
        <authorList>
            <person name="Maciejowski J."/>
            <person name="Drechsler H."/>
            <person name="Grundner-Culemann K."/>
            <person name="Ballister E.R."/>
            <person name="Rodriguez-Rodriguez J.A."/>
            <person name="Rodriguez-Bravo V."/>
            <person name="Jones M.J.K."/>
            <person name="Foley E."/>
            <person name="Lampson M.A."/>
            <person name="Daub H."/>
            <person name="McAinsh A.D."/>
            <person name="Jallepalli P.V."/>
        </authorList>
    </citation>
    <scope>PHOSPHORYLATION AT THR-13 AND SER-15</scope>
</reference>
<keyword id="KW-0002">3D-structure</keyword>
<keyword id="KW-0025">Alternative splicing</keyword>
<keyword id="KW-0131">Cell cycle</keyword>
<keyword id="KW-0132">Cell division</keyword>
<keyword id="KW-0137">Centromere</keyword>
<keyword id="KW-0158">Chromosome</keyword>
<keyword id="KW-0963">Cytoplasm</keyword>
<keyword id="KW-0206">Cytoskeleton</keyword>
<keyword id="KW-0995">Kinetochore</keyword>
<keyword id="KW-0498">Mitosis</keyword>
<keyword id="KW-0539">Nucleus</keyword>
<keyword id="KW-0597">Phosphoprotein</keyword>
<keyword id="KW-1267">Proteomics identification</keyword>
<keyword id="KW-1185">Reference proteome</keyword>
<proteinExistence type="evidence at protein level"/>
<sequence length="2209" mass="250749">MWNDIELLTNDDTGSGYLSVGSRKEHGTALYQVDLLVKISSEKASLNPKIQACSLSDGFIIVADQSVILLDSICRSLQLHLVFDTEVDVVGLCQEGKFLLVGERSGNLHLIHVTSKQTLLTNAFVQKANDENRRTYQNLVIEKDGSNEGTYYMLLLTYSGFFCITNLQLLKIQQAIENVDFSTAKKLQGQIKSSFISTENYHTLGCLSLVAGDLASEVPVIIGGTGNCAFSKWEPDSSKKGMTVKNLIDAEIIKGAKKFQLIDNLLFVLDTDNVLSLWDIYTLTPVWNWPSLHVEEFLLTTEADSPSSVTWQGITNLKLIALTASANKKMKNLMVYSLPTMEILYSLEVSSVSSLVQTGISTDTIYLLEGVCKNDPKLSEDSVSVLVLRCLTEALPENRLSRLLHKHRFAEAESFAIQFGLDVELVYKVKSNHILEKLALSSVDASEQTEWQQLVDDAKENLHKIQDDEFVVNYCLKAQWITYETTQEMLNYAKTRLLKKEDKTALIYSDGLKEVLRAHAKLTTFYGAFGPEKFSGSSWIEFLNNEDDLKDIFLQLKEGNLVCAQYLWLRHRANFESRFDVKMLESLLNSMSASVSLQKLCPWFKNDVIPFVRRTVPEGQIILAKWLEQAARNLELTDKANWPENGLQLAEIFFTAEKTDELGLASSWHWISLKDYQNTEEVCQLRTLVNNLRELITLHRKYNCKLALSDFEKENTTTIVFRMFDKVLAPELIPSILEKFIRVYMREHDLQEEELLLLYIEDLLNRCSSKSTSLFETAWEAKAMAVIACLSDTDLIFDAVLKIMYAAVVPWSAAVEQLVKQHLEMDHPKVKLLQESYKLMEMKKLLRGYGIREVNLLNKEIMRVVRYILKQDVPSSLEDALKVAQAFMLSDDEIYSLRIIDLIDREQGEDCLLLLKSLPPAEAEKTAERVIIWARLALQEEPDHSKEGKAWRMSVAKTSVDILKILCDIQKDNLQKKDECEEMLKLFKEVASLQENFEVFLSFEDYSNSSLVADLREQHIKAHEVAQAKHKPGSTPEPIAAEVRSPSMESKLHRQALALQMSKQELEAELTLRALKDGNIKTALKKCSDLFKYHCNADTGKLLFLTCQKLCQMLADNVPVTVPVGLNLPSMIHDLASQAATICSPDFLLDALELCKHTLMAVELSRQCQMDDCGILMKASFGTHKDPYEEWSYSDFFSEDGIVLESQMVLPVIYELISSLVPLAESKRYPLESTSLPYCSLNEGDGLVLPVINSISALLQNLQESSQWELALRFVVGSFGTCLQHSVSNFMNATLSEKLFGETTLVKSRHVVMELKEKAVIFIRENATTLLHKVFNCRLVDLDLALGYCTLLPQKDVFENLWKLIDKAWQNYDKILAISLVGSELASLYQEIEMGLKFRELSTDAQWGIRLGKLGISFQPVFRQHFLTKKDLIKALVENIDMDTSLILEYCSTFQLDCDAVLQLFIETLLHNTNAGQGQGDASMDSAKRRHPKLLAKALEMVPLLTSTKDLVISLSGILHKLDPYDYEMIEVVLKVIERADEKITNININQALSILKHLKSYRRISPPVDLEYQYMLEHVITLPSAAQTRLPFHLIFFGTAQNFWKILSTELSEESFPTLLLISKLMKFSLDTLYVSTAKHVFEKKLKPKLLKLTQAKSSTLINKEITKITQTIESCLLSIVNPEWAVAIAISLAQDIPEGSFKISALKFCLYLAERWLQNIPSQDEKREKAEALLKKLHIQYRRSGTEAVLIAHKLNTEEYLRVIGKPAHLIVSLYEHPSINQRIQNSSGTDYPDIHAAAKEIAEVNEINLEKVWDMLLEKWLCPSTKPGEKPSELFELQEDEALRRVQYLLLSRPIDYSSRMLFVFATSTTTTLGMHQLTFAHRTRALQCLFYLADKETIESLFKKPIEEVKSYLRCITFLASFETLNIPITYELFCSSPKEGMIKGLWKNHSHESMAVRLVTELCLEYKIYDLQLWNGLLQKLLGFNMIPYLRKVLKAISSIHSLWQVPYFSKAWQRVIQIPLLSASCPLSPDQLSDCSESLIAVLECPVSGDLDLIGVARQYIQLELPAFALACLMLMPHSEKRHQQIKNFLGSCDPQVILKQLEEHMNTGQLAGFSHQIRSLILNNIINKKEFGILAKTKYFQMLKMHAMNTNNITELVNYLANDLSLDEASVLITEYSKHCGKPVPPDTAPCEILKMFLSGLS</sequence>
<dbReference type="EMBL" id="D79988">
    <property type="protein sequence ID" value="BAA11483.2"/>
    <property type="status" value="ALT_INIT"/>
    <property type="molecule type" value="mRNA"/>
</dbReference>
<dbReference type="EMBL" id="AK093470">
    <property type="protein sequence ID" value="BAG52724.1"/>
    <property type="molecule type" value="mRNA"/>
</dbReference>
<dbReference type="EMBL" id="AC026333">
    <property type="status" value="NOT_ANNOTATED_CDS"/>
    <property type="molecule type" value="Genomic_DNA"/>
</dbReference>
<dbReference type="EMBL" id="AC127002">
    <property type="status" value="NOT_ANNOTATED_CDS"/>
    <property type="molecule type" value="Genomic_DNA"/>
</dbReference>
<dbReference type="EMBL" id="CH471054">
    <property type="protein sequence ID" value="EAW98334.1"/>
    <property type="molecule type" value="Genomic_DNA"/>
</dbReference>
<dbReference type="EMBL" id="BC150278">
    <property type="protein sequence ID" value="AAI50279.1"/>
    <property type="molecule type" value="mRNA"/>
</dbReference>
<dbReference type="CCDS" id="CCDS45002.1">
    <molecule id="P50748-1"/>
</dbReference>
<dbReference type="RefSeq" id="NP_055523.1">
    <molecule id="P50748-1"/>
    <property type="nucleotide sequence ID" value="NM_014708.6"/>
</dbReference>
<dbReference type="RefSeq" id="XP_006719769.1">
    <molecule id="P50748-1"/>
    <property type="nucleotide sequence ID" value="XM_006719706.3"/>
</dbReference>
<dbReference type="RefSeq" id="XP_054229870.1">
    <molecule id="P50748-1"/>
    <property type="nucleotide sequence ID" value="XM_054373895.1"/>
</dbReference>
<dbReference type="PDB" id="7QPG">
    <property type="method" value="EM"/>
    <property type="resolution" value="3.90 A"/>
    <property type="chains" value="R/S=2-2209"/>
</dbReference>
<dbReference type="PDBsum" id="7QPG"/>
<dbReference type="EMDB" id="EMD-14120"/>
<dbReference type="SMR" id="P50748"/>
<dbReference type="BioGRID" id="115084">
    <property type="interactions" value="99"/>
</dbReference>
<dbReference type="ComplexPortal" id="CPX-6017">
    <property type="entry name" value="RZZ complex"/>
</dbReference>
<dbReference type="CORUM" id="P50748"/>
<dbReference type="DIP" id="DIP-36479N"/>
<dbReference type="FunCoup" id="P50748">
    <property type="interactions" value="1813"/>
</dbReference>
<dbReference type="IntAct" id="P50748">
    <property type="interactions" value="72"/>
</dbReference>
<dbReference type="STRING" id="9606.ENSP00000328236"/>
<dbReference type="GlyGen" id="P50748">
    <property type="glycosylation" value="1 site, 1 O-linked glycan (1 site)"/>
</dbReference>
<dbReference type="iPTMnet" id="P50748"/>
<dbReference type="PhosphoSitePlus" id="P50748"/>
<dbReference type="SwissPalm" id="P50748"/>
<dbReference type="BioMuta" id="KNTC1"/>
<dbReference type="DMDM" id="1723117"/>
<dbReference type="jPOST" id="P50748"/>
<dbReference type="MassIVE" id="P50748"/>
<dbReference type="PaxDb" id="9606-ENSP00000328236"/>
<dbReference type="PeptideAtlas" id="P50748"/>
<dbReference type="ProteomicsDB" id="3637"/>
<dbReference type="ProteomicsDB" id="56261">
    <molecule id="P50748-1"/>
</dbReference>
<dbReference type="Pumba" id="P50748"/>
<dbReference type="Antibodypedia" id="9885">
    <property type="antibodies" value="127 antibodies from 19 providers"/>
</dbReference>
<dbReference type="DNASU" id="9735"/>
<dbReference type="Ensembl" id="ENST00000333479.12">
    <molecule id="P50748-1"/>
    <property type="protein sequence ID" value="ENSP00000328236.6"/>
    <property type="gene ID" value="ENSG00000184445.12"/>
</dbReference>
<dbReference type="GeneID" id="9735"/>
<dbReference type="KEGG" id="hsa:9735"/>
<dbReference type="MANE-Select" id="ENST00000333479.12">
    <property type="protein sequence ID" value="ENSP00000328236.6"/>
    <property type="RefSeq nucleotide sequence ID" value="NM_014708.6"/>
    <property type="RefSeq protein sequence ID" value="NP_055523.1"/>
</dbReference>
<dbReference type="UCSC" id="uc001ucv.4">
    <molecule id="P50748-1"/>
    <property type="organism name" value="human"/>
</dbReference>
<dbReference type="AGR" id="HGNC:17255"/>
<dbReference type="CTD" id="9735"/>
<dbReference type="DisGeNET" id="9735"/>
<dbReference type="GeneCards" id="KNTC1"/>
<dbReference type="HGNC" id="HGNC:17255">
    <property type="gene designation" value="KNTC1"/>
</dbReference>
<dbReference type="HPA" id="ENSG00000184445">
    <property type="expression patterns" value="Tissue enhanced (bone)"/>
</dbReference>
<dbReference type="MIM" id="607363">
    <property type="type" value="gene"/>
</dbReference>
<dbReference type="neXtProt" id="NX_P50748"/>
<dbReference type="OpenTargets" id="ENSG00000184445"/>
<dbReference type="PharmGKB" id="PA30184"/>
<dbReference type="VEuPathDB" id="HostDB:ENSG00000184445"/>
<dbReference type="eggNOG" id="KOG4256">
    <property type="taxonomic scope" value="Eukaryota"/>
</dbReference>
<dbReference type="GeneTree" id="ENSGT00390000007883"/>
<dbReference type="HOGENOM" id="CLU_231522_0_0_1"/>
<dbReference type="InParanoid" id="P50748"/>
<dbReference type="OMA" id="FYELYLC"/>
<dbReference type="OrthoDB" id="343783at2759"/>
<dbReference type="PAN-GO" id="P50748">
    <property type="GO annotations" value="7 GO annotations based on evolutionary models"/>
</dbReference>
<dbReference type="PhylomeDB" id="P50748"/>
<dbReference type="TreeFam" id="TF101176"/>
<dbReference type="PathwayCommons" id="P50748"/>
<dbReference type="Reactome" id="R-HSA-141444">
    <property type="pathway name" value="Amplification of signal from unattached kinetochores via a MAD2 inhibitory signal"/>
</dbReference>
<dbReference type="Reactome" id="R-HSA-2467813">
    <property type="pathway name" value="Separation of Sister Chromatids"/>
</dbReference>
<dbReference type="Reactome" id="R-HSA-2500257">
    <property type="pathway name" value="Resolution of Sister Chromatid Cohesion"/>
</dbReference>
<dbReference type="Reactome" id="R-HSA-5663220">
    <property type="pathway name" value="RHO GTPases Activate Formins"/>
</dbReference>
<dbReference type="Reactome" id="R-HSA-68877">
    <property type="pathway name" value="Mitotic Prometaphase"/>
</dbReference>
<dbReference type="Reactome" id="R-HSA-9648025">
    <property type="pathway name" value="EML4 and NUDC in mitotic spindle formation"/>
</dbReference>
<dbReference type="SignaLink" id="P50748"/>
<dbReference type="SIGNOR" id="P50748"/>
<dbReference type="BioGRID-ORCS" id="9735">
    <property type="hits" value="207 hits in 1168 CRISPR screens"/>
</dbReference>
<dbReference type="ChiTaRS" id="KNTC1">
    <property type="organism name" value="human"/>
</dbReference>
<dbReference type="GenomeRNAi" id="9735"/>
<dbReference type="Pharos" id="P50748">
    <property type="development level" value="Tbio"/>
</dbReference>
<dbReference type="PRO" id="PR:P50748"/>
<dbReference type="Proteomes" id="UP000005640">
    <property type="component" value="Chromosome 12"/>
</dbReference>
<dbReference type="RNAct" id="P50748">
    <property type="molecule type" value="protein"/>
</dbReference>
<dbReference type="Bgee" id="ENSG00000184445">
    <property type="expression patterns" value="Expressed in primordial germ cell in gonad and 146 other cell types or tissues"/>
</dbReference>
<dbReference type="ExpressionAtlas" id="P50748">
    <property type="expression patterns" value="baseline and differential"/>
</dbReference>
<dbReference type="GO" id="GO:0015629">
    <property type="term" value="C:actin cytoskeleton"/>
    <property type="evidence" value="ECO:0000314"/>
    <property type="project" value="HPA"/>
</dbReference>
<dbReference type="GO" id="GO:0005737">
    <property type="term" value="C:cytoplasm"/>
    <property type="evidence" value="ECO:0000318"/>
    <property type="project" value="GO_Central"/>
</dbReference>
<dbReference type="GO" id="GO:0005829">
    <property type="term" value="C:cytosol"/>
    <property type="evidence" value="ECO:0000314"/>
    <property type="project" value="HPA"/>
</dbReference>
<dbReference type="GO" id="GO:0005828">
    <property type="term" value="C:kinetochore microtubule"/>
    <property type="evidence" value="ECO:0000314"/>
    <property type="project" value="UniProtKB"/>
</dbReference>
<dbReference type="GO" id="GO:0005634">
    <property type="term" value="C:nucleus"/>
    <property type="evidence" value="ECO:0000303"/>
    <property type="project" value="UniProtKB"/>
</dbReference>
<dbReference type="GO" id="GO:0005886">
    <property type="term" value="C:plasma membrane"/>
    <property type="evidence" value="ECO:0000314"/>
    <property type="project" value="HPA"/>
</dbReference>
<dbReference type="GO" id="GO:1990423">
    <property type="term" value="C:RZZ complex"/>
    <property type="evidence" value="ECO:0000314"/>
    <property type="project" value="UniProtKB"/>
</dbReference>
<dbReference type="GO" id="GO:0000922">
    <property type="term" value="C:spindle pole"/>
    <property type="evidence" value="ECO:0000314"/>
    <property type="project" value="UniProtKB"/>
</dbReference>
<dbReference type="GO" id="GO:0031267">
    <property type="term" value="F:small GTPase binding"/>
    <property type="evidence" value="ECO:0000318"/>
    <property type="project" value="GO_Central"/>
</dbReference>
<dbReference type="GO" id="GO:0051301">
    <property type="term" value="P:cell division"/>
    <property type="evidence" value="ECO:0007669"/>
    <property type="project" value="UniProtKB-KW"/>
</dbReference>
<dbReference type="GO" id="GO:0000070">
    <property type="term" value="P:mitotic sister chromatid segregation"/>
    <property type="evidence" value="ECO:0000318"/>
    <property type="project" value="GO_Central"/>
</dbReference>
<dbReference type="GO" id="GO:0007094">
    <property type="term" value="P:mitotic spindle assembly checkpoint signaling"/>
    <property type="evidence" value="ECO:0000314"/>
    <property type="project" value="UniProtKB"/>
</dbReference>
<dbReference type="GO" id="GO:1903394">
    <property type="term" value="P:protein localization to kinetochore involved in kinetochore assembly"/>
    <property type="evidence" value="ECO:0000318"/>
    <property type="project" value="GO_Central"/>
</dbReference>
<dbReference type="GO" id="GO:0065003">
    <property type="term" value="P:protein-containing complex assembly"/>
    <property type="evidence" value="ECO:0000303"/>
    <property type="project" value="UniProtKB"/>
</dbReference>
<dbReference type="GO" id="GO:0051988">
    <property type="term" value="P:regulation of attachment of spindle microtubules to kinetochore"/>
    <property type="evidence" value="ECO:0000303"/>
    <property type="project" value="ComplexPortal"/>
</dbReference>
<dbReference type="GO" id="GO:0007096">
    <property type="term" value="P:regulation of exit from mitosis"/>
    <property type="evidence" value="ECO:0000303"/>
    <property type="project" value="UniProtKB"/>
</dbReference>
<dbReference type="InterPro" id="IPR055403">
    <property type="entry name" value="ARM_KNTC1_1st"/>
</dbReference>
<dbReference type="InterPro" id="IPR055404">
    <property type="entry name" value="ARM_KNTC1_2nd"/>
</dbReference>
<dbReference type="InterPro" id="IPR055405">
    <property type="entry name" value="ARM_KNTC1_3rd"/>
</dbReference>
<dbReference type="InterPro" id="IPR052802">
    <property type="entry name" value="KNTC1"/>
</dbReference>
<dbReference type="InterPro" id="IPR055402">
    <property type="entry name" value="KNTC1_N"/>
</dbReference>
<dbReference type="InterPro" id="IPR019527">
    <property type="entry name" value="RZZ-complex_KNTC1/ROD_C"/>
</dbReference>
<dbReference type="InterPro" id="IPR036322">
    <property type="entry name" value="WD40_repeat_dom_sf"/>
</dbReference>
<dbReference type="PANTHER" id="PTHR15688">
    <property type="entry name" value="KINETOCHORE-ASSOCIATED PROTEIN 1"/>
    <property type="match status" value="1"/>
</dbReference>
<dbReference type="PANTHER" id="PTHR15688:SF1">
    <property type="entry name" value="KINETOCHORE-ASSOCIATED PROTEIN 1"/>
    <property type="match status" value="1"/>
</dbReference>
<dbReference type="Pfam" id="PF24520">
    <property type="entry name" value="ARM_KNTC1_1st"/>
    <property type="match status" value="1"/>
</dbReference>
<dbReference type="Pfam" id="PF24516">
    <property type="entry name" value="ARM_KNTC1_2nd"/>
    <property type="match status" value="1"/>
</dbReference>
<dbReference type="Pfam" id="PF24515">
    <property type="entry name" value="ARM_KNTC1_3rd"/>
    <property type="match status" value="1"/>
</dbReference>
<dbReference type="Pfam" id="PF24506">
    <property type="entry name" value="KNTC1_N"/>
    <property type="match status" value="1"/>
</dbReference>
<dbReference type="Pfam" id="PF10493">
    <property type="entry name" value="Rod_C"/>
    <property type="match status" value="1"/>
</dbReference>
<dbReference type="SUPFAM" id="SSF50978">
    <property type="entry name" value="WD40 repeat-like"/>
    <property type="match status" value="1"/>
</dbReference>
<gene>
    <name type="primary">KNTC1</name>
    <name type="synonym">KIAA0166</name>
    <name evidence="8" type="synonym">ROD</name>
</gene>
<accession>P50748</accession>
<accession>A7E2C4</accession>
<accession>B3KSG2</accession>
<organism>
    <name type="scientific">Homo sapiens</name>
    <name type="common">Human</name>
    <dbReference type="NCBI Taxonomy" id="9606"/>
    <lineage>
        <taxon>Eukaryota</taxon>
        <taxon>Metazoa</taxon>
        <taxon>Chordata</taxon>
        <taxon>Craniata</taxon>
        <taxon>Vertebrata</taxon>
        <taxon>Euteleostomi</taxon>
        <taxon>Mammalia</taxon>
        <taxon>Eutheria</taxon>
        <taxon>Euarchontoglires</taxon>
        <taxon>Primates</taxon>
        <taxon>Haplorrhini</taxon>
        <taxon>Catarrhini</taxon>
        <taxon>Hominidae</taxon>
        <taxon>Homo</taxon>
    </lineage>
</organism>
<feature type="chain" id="PRO_0000084312" description="Kinetochore-associated protein 1">
    <location>
        <begin position="1"/>
        <end position="2209"/>
    </location>
</feature>
<feature type="modified residue" description="Phosphothreonine; by TTK" evidence="6">
    <location>
        <position position="13"/>
    </location>
</feature>
<feature type="modified residue" description="Phosphoserine; by TTK" evidence="6">
    <location>
        <position position="15"/>
    </location>
</feature>
<feature type="modified residue" description="Phosphothreonine" evidence="10">
    <location>
        <position position="1035"/>
    </location>
</feature>
<feature type="modified residue" description="Phosphoserine" evidence="10">
    <location>
        <position position="1045"/>
    </location>
</feature>
<feature type="splice variant" id="VSP_057013" description="In isoform 2." evidence="7">
    <location>
        <begin position="1"/>
        <end position="1575"/>
    </location>
</feature>
<feature type="splice variant" id="VSP_057014" description="In isoform 2." evidence="7">
    <original>VPYFSKAW</original>
    <variation>RWRSCYVA</variation>
    <location>
        <begin position="2011"/>
        <end position="2018"/>
    </location>
</feature>
<feature type="splice variant" id="VSP_057015" description="In isoform 2." evidence="7">
    <location>
        <begin position="2019"/>
        <end position="2209"/>
    </location>
</feature>
<feature type="sequence variant" id="VAR_051082" description="In dbSNP:rs7968222.">
    <original>K</original>
    <variation>N</variation>
    <location>
        <position position="245"/>
    </location>
</feature>
<feature type="sequence variant" id="VAR_051083" description="In dbSNP:rs17883249.">
    <original>E</original>
    <variation>D</variation>
    <location>
        <position position="738"/>
    </location>
</feature>
<feature type="sequence variant" id="VAR_051084" description="In dbSNP:rs35315099.">
    <original>T</original>
    <variation>M</variation>
    <location>
        <position position="1506"/>
    </location>
</feature>
<feature type="sequence variant" id="VAR_051085" description="In dbSNP:rs7310898.">
    <original>P</original>
    <variation>L</variation>
    <location>
        <position position="1830"/>
    </location>
</feature>
<feature type="sequence variant" id="VAR_051086" description="In dbSNP:rs11837038.">
    <original>V</original>
    <variation>G</variation>
    <location>
        <position position="2021"/>
    </location>
</feature>
<name>KNTC1_HUMAN</name>
<protein>
    <recommendedName>
        <fullName>Kinetochore-associated protein 1</fullName>
    </recommendedName>
    <alternativeName>
        <fullName>Rough deal homolog</fullName>
        <shortName>HsROD</shortName>
        <shortName>Rod</shortName>
        <shortName>hRod</shortName>
    </alternativeName>
</protein>
<evidence type="ECO:0000269" key="1">
    <source>
    </source>
</evidence>
<evidence type="ECO:0000269" key="2">
    <source>
    </source>
</evidence>
<evidence type="ECO:0000269" key="3">
    <source>
    </source>
</evidence>
<evidence type="ECO:0000269" key="4">
    <source>
    </source>
</evidence>
<evidence type="ECO:0000269" key="5">
    <source>
    </source>
</evidence>
<evidence type="ECO:0000269" key="6">
    <source>
    </source>
</evidence>
<evidence type="ECO:0000303" key="7">
    <source>
    </source>
</evidence>
<evidence type="ECO:0000303" key="8">
    <source>
    </source>
</evidence>
<evidence type="ECO:0000305" key="9"/>
<evidence type="ECO:0007744" key="10">
    <source>
    </source>
</evidence>
<comment type="function">
    <text evidence="1 2 4 9">Essential component of the mitotic checkpoint, which prevents cells from prematurely exiting mitosis. Required for the assembly of the dynein-dynactin and MAD1-MAD2 complexes onto kinetochores (PubMed:11146660, PubMed:11590237, PubMed:15824131). Its function related to the spindle assembly machinery is proposed to depend on its association in the mitotic RZZ complex.</text>
</comment>
<comment type="subunit">
    <text evidence="3 4 5">Interacts with ZW10; the interaction is required for stable association with the kinetochore. Component of the RZZ complex composed of KNTC1/ROD, ZW10 and ZWILCH; in the complex interacts directly with ZWILCH.</text>
</comment>
<comment type="interaction">
    <interactant intactId="EBI-1001245">
        <id>P50748</id>
    </interactant>
    <interactant intactId="EBI-1001239">
        <id>Q9H900</id>
        <label>ZWILCH</label>
    </interactant>
    <organismsDiffer>false</organismsDiffer>
    <experiments>2</experiments>
</comment>
<comment type="subcellular location">
    <subcellularLocation>
        <location>Cytoplasm</location>
    </subcellularLocation>
    <subcellularLocation>
        <location>Nucleus</location>
    </subcellularLocation>
    <subcellularLocation>
        <location>Chromosome</location>
        <location>Centromere</location>
        <location>Kinetochore</location>
    </subcellularLocation>
    <subcellularLocation>
        <location>Cytoplasm</location>
        <location>Cytoskeleton</location>
        <location>Spindle</location>
    </subcellularLocation>
    <text>Dynamic pattern of localization during the cell cycle. At interphase, uniformly distributed throughout the cytoplasm and nucleus. By prophase and until late stages of prometaphase, a fraction of the total pool is concentrated at kinetochores. By metaphase, detected at kinetochores, along spindle fibers and most prominently at the poles. By late anaphase until the end of telophase, no longer detectable on kinetochores or along spindle fibers, but still present at the spindle poles.</text>
</comment>
<comment type="alternative products">
    <event type="alternative splicing"/>
    <isoform>
        <id>P50748-1</id>
        <name>1</name>
        <sequence type="displayed"/>
    </isoform>
    <isoform>
        <id>P50748-2</id>
        <name>2</name>
        <sequence type="described" ref="VSP_057013 VSP_057014 VSP_057015"/>
    </isoform>
</comment>
<comment type="tissue specificity">
    <text>High expression in testis.</text>
</comment>
<comment type="sequence caution" evidence="9">
    <conflict type="erroneous initiation">
        <sequence resource="EMBL-CDS" id="BAA11483"/>
    </conflict>
</comment>